<dbReference type="EC" id="2.5.1.39" evidence="1"/>
<dbReference type="EMBL" id="CP000627">
    <property type="protein sequence ID" value="ABQ20837.1"/>
    <property type="molecule type" value="Genomic_DNA"/>
</dbReference>
<dbReference type="EMBL" id="CP001235">
    <property type="protein sequence ID" value="ACP08114.1"/>
    <property type="molecule type" value="Genomic_DNA"/>
</dbReference>
<dbReference type="RefSeq" id="WP_000127681.1">
    <property type="nucleotide sequence ID" value="NZ_JAACZH010000014.1"/>
</dbReference>
<dbReference type="SMR" id="A5F4H4"/>
<dbReference type="KEGG" id="vco:VC0395_A2421"/>
<dbReference type="KEGG" id="vcr:VC395_0086"/>
<dbReference type="PATRIC" id="fig|345073.21.peg.78"/>
<dbReference type="eggNOG" id="COG0382">
    <property type="taxonomic scope" value="Bacteria"/>
</dbReference>
<dbReference type="HOGENOM" id="CLU_034879_1_0_6"/>
<dbReference type="OrthoDB" id="9782418at2"/>
<dbReference type="UniPathway" id="UPA00232"/>
<dbReference type="Proteomes" id="UP000000249">
    <property type="component" value="Chromosome 2"/>
</dbReference>
<dbReference type="GO" id="GO:0005886">
    <property type="term" value="C:plasma membrane"/>
    <property type="evidence" value="ECO:0007669"/>
    <property type="project" value="UniProtKB-SubCell"/>
</dbReference>
<dbReference type="GO" id="GO:0008412">
    <property type="term" value="F:4-hydroxybenzoate polyprenyltransferase activity"/>
    <property type="evidence" value="ECO:0007669"/>
    <property type="project" value="UniProtKB-UniRule"/>
</dbReference>
<dbReference type="GO" id="GO:0006744">
    <property type="term" value="P:ubiquinone biosynthetic process"/>
    <property type="evidence" value="ECO:0007669"/>
    <property type="project" value="UniProtKB-UniRule"/>
</dbReference>
<dbReference type="CDD" id="cd13959">
    <property type="entry name" value="PT_UbiA_COQ2"/>
    <property type="match status" value="1"/>
</dbReference>
<dbReference type="FunFam" id="1.10.357.140:FF:000002">
    <property type="entry name" value="4-hydroxybenzoate octaprenyltransferase"/>
    <property type="match status" value="1"/>
</dbReference>
<dbReference type="FunFam" id="1.20.120.1780:FF:000001">
    <property type="entry name" value="4-hydroxybenzoate octaprenyltransferase"/>
    <property type="match status" value="1"/>
</dbReference>
<dbReference type="Gene3D" id="1.10.357.140">
    <property type="entry name" value="UbiA prenyltransferase"/>
    <property type="match status" value="1"/>
</dbReference>
<dbReference type="Gene3D" id="1.20.120.1780">
    <property type="entry name" value="UbiA prenyltransferase"/>
    <property type="match status" value="1"/>
</dbReference>
<dbReference type="HAMAP" id="MF_01635">
    <property type="entry name" value="UbiA"/>
    <property type="match status" value="1"/>
</dbReference>
<dbReference type="InterPro" id="IPR006370">
    <property type="entry name" value="HB_polyprenyltransferase-like"/>
</dbReference>
<dbReference type="InterPro" id="IPR039653">
    <property type="entry name" value="Prenyltransferase"/>
</dbReference>
<dbReference type="InterPro" id="IPR000537">
    <property type="entry name" value="UbiA_prenyltransferase"/>
</dbReference>
<dbReference type="InterPro" id="IPR044878">
    <property type="entry name" value="UbiA_sf"/>
</dbReference>
<dbReference type="NCBIfam" id="TIGR01474">
    <property type="entry name" value="ubiA_proteo"/>
    <property type="match status" value="1"/>
</dbReference>
<dbReference type="PANTHER" id="PTHR11048:SF28">
    <property type="entry name" value="4-HYDROXYBENZOATE POLYPRENYLTRANSFERASE, MITOCHONDRIAL"/>
    <property type="match status" value="1"/>
</dbReference>
<dbReference type="PANTHER" id="PTHR11048">
    <property type="entry name" value="PRENYLTRANSFERASES"/>
    <property type="match status" value="1"/>
</dbReference>
<dbReference type="Pfam" id="PF01040">
    <property type="entry name" value="UbiA"/>
    <property type="match status" value="1"/>
</dbReference>
<protein>
    <recommendedName>
        <fullName evidence="1">4-hydroxybenzoate octaprenyltransferase</fullName>
        <ecNumber evidence="1">2.5.1.39</ecNumber>
    </recommendedName>
    <alternativeName>
        <fullName evidence="1">4-HB polyprenyltransferase</fullName>
    </alternativeName>
</protein>
<proteinExistence type="inferred from homology"/>
<name>UBIA_VIBC3</name>
<comment type="function">
    <text evidence="1">Catalyzes the prenylation of para-hydroxybenzoate (PHB) with an all-trans polyprenyl group. Mediates the second step in the final reaction sequence of ubiquinone-8 (UQ-8) biosynthesis, which is the condensation of the polyisoprenoid side chain with PHB, generating the first membrane-bound Q intermediate 3-octaprenyl-4-hydroxybenzoate.</text>
</comment>
<comment type="catalytic activity">
    <reaction evidence="1">
        <text>all-trans-octaprenyl diphosphate + 4-hydroxybenzoate = 4-hydroxy-3-(all-trans-octaprenyl)benzoate + diphosphate</text>
        <dbReference type="Rhea" id="RHEA:27782"/>
        <dbReference type="ChEBI" id="CHEBI:1617"/>
        <dbReference type="ChEBI" id="CHEBI:17879"/>
        <dbReference type="ChEBI" id="CHEBI:33019"/>
        <dbReference type="ChEBI" id="CHEBI:57711"/>
        <dbReference type="EC" id="2.5.1.39"/>
    </reaction>
</comment>
<comment type="cofactor">
    <cofactor evidence="1">
        <name>Mg(2+)</name>
        <dbReference type="ChEBI" id="CHEBI:18420"/>
    </cofactor>
</comment>
<comment type="pathway">
    <text evidence="1">Cofactor biosynthesis; ubiquinone biosynthesis.</text>
</comment>
<comment type="subcellular location">
    <subcellularLocation>
        <location evidence="1">Cell inner membrane</location>
        <topology evidence="1">Multi-pass membrane protein</topology>
    </subcellularLocation>
</comment>
<comment type="similarity">
    <text evidence="1">Belongs to the UbiA prenyltransferase family.</text>
</comment>
<organism>
    <name type="scientific">Vibrio cholerae serotype O1 (strain ATCC 39541 / Classical Ogawa 395 / O395)</name>
    <dbReference type="NCBI Taxonomy" id="345073"/>
    <lineage>
        <taxon>Bacteria</taxon>
        <taxon>Pseudomonadati</taxon>
        <taxon>Pseudomonadota</taxon>
        <taxon>Gammaproteobacteria</taxon>
        <taxon>Vibrionales</taxon>
        <taxon>Vibrionaceae</taxon>
        <taxon>Vibrio</taxon>
    </lineage>
</organism>
<keyword id="KW-0997">Cell inner membrane</keyword>
<keyword id="KW-1003">Cell membrane</keyword>
<keyword id="KW-0460">Magnesium</keyword>
<keyword id="KW-0472">Membrane</keyword>
<keyword id="KW-0808">Transferase</keyword>
<keyword id="KW-0812">Transmembrane</keyword>
<keyword id="KW-1133">Transmembrane helix</keyword>
<keyword id="KW-0831">Ubiquinone biosynthesis</keyword>
<sequence>MTAVKARAYWQLMRMDRPIGSLLLLWPTLWALLLAAQGLPDLRVLVVFVLGVFLMRSAGCVINDYADRHVDGHVKRTSQRPLPAGLVSAKEALLLFVLLAVSSFLLVLTMNTLTIQLSFIGILLAFVYPFMKRFTHLPQLVLGLAFSWSIPMAWAAQANTLTPQVWVLFLINALWTIAYDTQYAMVDRDDDVKIGIKSTAILFGRWDKRIIGLLQLATLSLLVALGQGLALGTSYYWGLLIAAGLFAYQQHLIRYRERMPCFQAFLNNNYVGMAITAGILLSVW</sequence>
<evidence type="ECO:0000255" key="1">
    <source>
        <dbReference type="HAMAP-Rule" id="MF_01635"/>
    </source>
</evidence>
<accession>A5F4H4</accession>
<accession>C3M2F0</accession>
<reference key="1">
    <citation type="submission" date="2007-03" db="EMBL/GenBank/DDBJ databases">
        <authorList>
            <person name="Heidelberg J."/>
        </authorList>
    </citation>
    <scope>NUCLEOTIDE SEQUENCE [LARGE SCALE GENOMIC DNA]</scope>
    <source>
        <strain>ATCC 39541 / Classical Ogawa 395 / O395</strain>
    </source>
</reference>
<reference key="2">
    <citation type="journal article" date="2008" name="PLoS ONE">
        <title>A recalibrated molecular clock and independent origins for the cholera pandemic clones.</title>
        <authorList>
            <person name="Feng L."/>
            <person name="Reeves P.R."/>
            <person name="Lan R."/>
            <person name="Ren Y."/>
            <person name="Gao C."/>
            <person name="Zhou Z."/>
            <person name="Ren Y."/>
            <person name="Cheng J."/>
            <person name="Wang W."/>
            <person name="Wang J."/>
            <person name="Qian W."/>
            <person name="Li D."/>
            <person name="Wang L."/>
        </authorList>
    </citation>
    <scope>NUCLEOTIDE SEQUENCE [LARGE SCALE GENOMIC DNA]</scope>
    <source>
        <strain>ATCC 39541 / Classical Ogawa 395 / O395</strain>
    </source>
</reference>
<feature type="chain" id="PRO_1000073654" description="4-hydroxybenzoate octaprenyltransferase">
    <location>
        <begin position="1"/>
        <end position="284"/>
    </location>
</feature>
<feature type="transmembrane region" description="Helical" evidence="1">
    <location>
        <begin position="19"/>
        <end position="39"/>
    </location>
</feature>
<feature type="transmembrane region" description="Helical" evidence="1">
    <location>
        <begin position="42"/>
        <end position="62"/>
    </location>
</feature>
<feature type="transmembrane region" description="Helical" evidence="1">
    <location>
        <begin position="93"/>
        <end position="113"/>
    </location>
</feature>
<feature type="transmembrane region" description="Helical" evidence="1">
    <location>
        <begin position="114"/>
        <end position="134"/>
    </location>
</feature>
<feature type="transmembrane region" description="Helical" evidence="1">
    <location>
        <begin position="136"/>
        <end position="156"/>
    </location>
</feature>
<feature type="transmembrane region" description="Helical" evidence="1">
    <location>
        <begin position="158"/>
        <end position="178"/>
    </location>
</feature>
<feature type="transmembrane region" description="Helical" evidence="1">
    <location>
        <begin position="210"/>
        <end position="230"/>
    </location>
</feature>
<feature type="transmembrane region" description="Helical" evidence="1">
    <location>
        <begin position="233"/>
        <end position="253"/>
    </location>
</feature>
<feature type="transmembrane region" description="Helical" evidence="1">
    <location>
        <begin position="264"/>
        <end position="284"/>
    </location>
</feature>
<gene>
    <name evidence="1" type="primary">ubiA</name>
    <name type="ordered locus">VC0395_A2421</name>
    <name type="ordered locus">VC395_0086</name>
</gene>